<gene>
    <name type="primary">acyP</name>
    <name type="ordered locus">UNCMA_22200</name>
    <name type="ORF">RCIX552</name>
</gene>
<reference key="1">
    <citation type="journal article" date="2006" name="Science">
        <title>Genome of rice cluster I archaea -- the key methane producers in the rice rhizosphere.</title>
        <authorList>
            <person name="Erkel C."/>
            <person name="Kube M."/>
            <person name="Reinhardt R."/>
            <person name="Liesack W."/>
        </authorList>
    </citation>
    <scope>NUCLEOTIDE SEQUENCE [LARGE SCALE GENOMIC DNA]</scope>
    <source>
        <strain>DSM 22066 / NBRC 105507 / MRE50</strain>
    </source>
</reference>
<name>ACYP_METAR</name>
<protein>
    <recommendedName>
        <fullName>Acylphosphatase</fullName>
        <ecNumber>3.6.1.7</ecNumber>
    </recommendedName>
    <alternativeName>
        <fullName>Acylphosphate phosphohydrolase</fullName>
    </alternativeName>
</protein>
<organism>
    <name type="scientific">Methanocella arvoryzae (strain DSM 22066 / NBRC 105507 / MRE50)</name>
    <dbReference type="NCBI Taxonomy" id="351160"/>
    <lineage>
        <taxon>Archaea</taxon>
        <taxon>Methanobacteriati</taxon>
        <taxon>Methanobacteriota</taxon>
        <taxon>Stenosarchaea group</taxon>
        <taxon>Methanomicrobia</taxon>
        <taxon>Methanocellales</taxon>
        <taxon>Methanocellaceae</taxon>
        <taxon>Methanocella</taxon>
    </lineage>
</organism>
<evidence type="ECO:0000255" key="1">
    <source>
        <dbReference type="PROSITE-ProRule" id="PRU00520"/>
    </source>
</evidence>
<evidence type="ECO:0000305" key="2"/>
<comment type="catalytic activity">
    <reaction>
        <text>an acyl phosphate + H2O = a carboxylate + phosphate + H(+)</text>
        <dbReference type="Rhea" id="RHEA:14965"/>
        <dbReference type="ChEBI" id="CHEBI:15377"/>
        <dbReference type="ChEBI" id="CHEBI:15378"/>
        <dbReference type="ChEBI" id="CHEBI:29067"/>
        <dbReference type="ChEBI" id="CHEBI:43474"/>
        <dbReference type="ChEBI" id="CHEBI:59918"/>
        <dbReference type="EC" id="3.6.1.7"/>
    </reaction>
</comment>
<comment type="similarity">
    <text evidence="2">Belongs to the acylphosphatase family.</text>
</comment>
<accession>Q0W6M8</accession>
<keyword id="KW-0378">Hydrolase</keyword>
<keyword id="KW-1185">Reference proteome</keyword>
<proteinExistence type="inferred from homology"/>
<feature type="chain" id="PRO_0000326874" description="Acylphosphatase">
    <location>
        <begin position="1"/>
        <end position="88"/>
    </location>
</feature>
<feature type="domain" description="Acylphosphatase-like" evidence="1">
    <location>
        <begin position="3"/>
        <end position="88"/>
    </location>
</feature>
<feature type="active site" evidence="1">
    <location>
        <position position="18"/>
    </location>
</feature>
<feature type="active site" evidence="1">
    <location>
        <position position="36"/>
    </location>
</feature>
<sequence>MKAVDVLISGRVQKVGYRAFTRKNALLLGIKGYVENMPDGKVHAVLEGDDHQIDKLLELLRQGPVVSQVRDIKVTEIERAGHQGFEVR</sequence>
<dbReference type="EC" id="3.6.1.7"/>
<dbReference type="EMBL" id="AM114193">
    <property type="protein sequence ID" value="CAJ35965.1"/>
    <property type="molecule type" value="Genomic_DNA"/>
</dbReference>
<dbReference type="RefSeq" id="WP_012036540.1">
    <property type="nucleotide sequence ID" value="NC_009464.1"/>
</dbReference>
<dbReference type="SMR" id="Q0W6M8"/>
<dbReference type="STRING" id="351160.RCIX552"/>
<dbReference type="GeneID" id="5143483"/>
<dbReference type="KEGG" id="rci:RCIX552"/>
<dbReference type="eggNOG" id="arCOG01674">
    <property type="taxonomic scope" value="Archaea"/>
</dbReference>
<dbReference type="OrthoDB" id="6643at2157"/>
<dbReference type="Proteomes" id="UP000000663">
    <property type="component" value="Chromosome"/>
</dbReference>
<dbReference type="GO" id="GO:0003998">
    <property type="term" value="F:acylphosphatase activity"/>
    <property type="evidence" value="ECO:0007669"/>
    <property type="project" value="UniProtKB-EC"/>
</dbReference>
<dbReference type="Gene3D" id="3.30.70.100">
    <property type="match status" value="1"/>
</dbReference>
<dbReference type="InterPro" id="IPR020456">
    <property type="entry name" value="Acylphosphatase"/>
</dbReference>
<dbReference type="InterPro" id="IPR001792">
    <property type="entry name" value="Acylphosphatase-like_dom"/>
</dbReference>
<dbReference type="InterPro" id="IPR036046">
    <property type="entry name" value="Acylphosphatase-like_dom_sf"/>
</dbReference>
<dbReference type="PANTHER" id="PTHR47268">
    <property type="entry name" value="ACYLPHOSPHATASE"/>
    <property type="match status" value="1"/>
</dbReference>
<dbReference type="PANTHER" id="PTHR47268:SF4">
    <property type="entry name" value="ACYLPHOSPHATASE"/>
    <property type="match status" value="1"/>
</dbReference>
<dbReference type="Pfam" id="PF00708">
    <property type="entry name" value="Acylphosphatase"/>
    <property type="match status" value="1"/>
</dbReference>
<dbReference type="SUPFAM" id="SSF54975">
    <property type="entry name" value="Acylphosphatase/BLUF domain-like"/>
    <property type="match status" value="1"/>
</dbReference>
<dbReference type="PROSITE" id="PS51160">
    <property type="entry name" value="ACYLPHOSPHATASE_3"/>
    <property type="match status" value="1"/>
</dbReference>